<reference key="1">
    <citation type="journal article" date="1989" name="Mol. Biochem. Parasitol.">
        <title>Comparison of the primary structure of the 25 kDa ookinete surface antigens of Plasmodium falciparum and Plasmodium gallinaceum reveal six conserved regions.</title>
        <authorList>
            <person name="Kaslow D.C."/>
            <person name="Syin C."/>
            <person name="McCutchan T.F."/>
            <person name="Miller L.H."/>
        </authorList>
    </citation>
    <scope>NUCLEOTIDE SEQUENCE [MRNA]</scope>
</reference>
<proteinExistence type="evidence at transcript level"/>
<dbReference type="EMBL" id="J04008">
    <property type="protein sequence ID" value="AAA29487.1"/>
    <property type="molecule type" value="mRNA"/>
</dbReference>
<dbReference type="SMR" id="P13401"/>
<dbReference type="VEuPathDB" id="PlasmoDB:PGAL8A_00490300"/>
<dbReference type="GO" id="GO:0009986">
    <property type="term" value="C:cell surface"/>
    <property type="evidence" value="ECO:0007669"/>
    <property type="project" value="InterPro"/>
</dbReference>
<dbReference type="GO" id="GO:0005886">
    <property type="term" value="C:plasma membrane"/>
    <property type="evidence" value="ECO:0007669"/>
    <property type="project" value="UniProtKB-SubCell"/>
</dbReference>
<dbReference type="GO" id="GO:0098552">
    <property type="term" value="C:side of membrane"/>
    <property type="evidence" value="ECO:0007669"/>
    <property type="project" value="UniProtKB-KW"/>
</dbReference>
<dbReference type="Gene3D" id="2.90.20.10">
    <property type="entry name" value="Plasmodium vivax P25 domain"/>
    <property type="match status" value="1"/>
</dbReference>
<dbReference type="InterPro" id="IPR000742">
    <property type="entry name" value="EGF-like_dom"/>
</dbReference>
<dbReference type="InterPro" id="IPR010423">
    <property type="entry name" value="Pvs25/Psv28_EGF"/>
</dbReference>
<dbReference type="Pfam" id="PF06247">
    <property type="entry name" value="Plasmod_Pvs28"/>
    <property type="match status" value="2"/>
</dbReference>
<dbReference type="SMART" id="SM00181">
    <property type="entry name" value="EGF"/>
    <property type="match status" value="4"/>
</dbReference>
<dbReference type="SUPFAM" id="SSF57196">
    <property type="entry name" value="EGF/Laminin"/>
    <property type="match status" value="1"/>
</dbReference>
<dbReference type="PROSITE" id="PS01186">
    <property type="entry name" value="EGF_2"/>
    <property type="match status" value="3"/>
</dbReference>
<evidence type="ECO:0000250" key="1"/>
<evidence type="ECO:0000255" key="2"/>
<evidence type="ECO:0000305" key="3"/>
<organism>
    <name type="scientific">Plasmodium gallinaceum</name>
    <dbReference type="NCBI Taxonomy" id="5849"/>
    <lineage>
        <taxon>Eukaryota</taxon>
        <taxon>Sar</taxon>
        <taxon>Alveolata</taxon>
        <taxon>Apicomplexa</taxon>
        <taxon>Aconoidasida</taxon>
        <taxon>Haemosporida</taxon>
        <taxon>Plasmodiidae</taxon>
        <taxon>Plasmodium</taxon>
        <taxon>Plasmodium (Haemamoeba)</taxon>
    </lineage>
</organism>
<feature type="signal peptide">
    <location>
        <begin position="1"/>
        <end position="16"/>
    </location>
</feature>
<feature type="chain" id="PRO_0000024569" description="25 kDa ookinete surface antigen">
    <location>
        <begin position="17"/>
        <end position="192"/>
    </location>
</feature>
<feature type="propeptide" id="PRO_0000024570" description="Removed in mature form" evidence="2">
    <location>
        <begin position="193"/>
        <end position="215"/>
    </location>
</feature>
<feature type="domain" description="EGF-like 1; truncated">
    <location>
        <begin position="29"/>
        <end position="58"/>
    </location>
</feature>
<feature type="domain" description="EGF-like 2">
    <location>
        <begin position="59"/>
        <end position="104"/>
    </location>
</feature>
<feature type="domain" description="EGF-like 3">
    <location>
        <begin position="104"/>
        <end position="148"/>
    </location>
</feature>
<feature type="domain" description="EGF-like 4">
    <location>
        <begin position="151"/>
        <end position="191"/>
    </location>
</feature>
<feature type="lipid moiety-binding region" description="GPI-anchor amidated serine" evidence="2">
    <location>
        <position position="192"/>
    </location>
</feature>
<feature type="glycosylation site" description="N-linked (GlcNAc...) asparagine" evidence="2">
    <location>
        <position position="144"/>
    </location>
</feature>
<feature type="glycosylation site" description="N-linked (GlcNAc...) asparagine" evidence="2">
    <location>
        <position position="163"/>
    </location>
</feature>
<feature type="glycosylation site" description="N-linked (GlcNAc...) asparagine" evidence="2">
    <location>
        <position position="200"/>
    </location>
</feature>
<feature type="disulfide bond" evidence="1">
    <location>
        <begin position="63"/>
        <end position="78"/>
    </location>
</feature>
<feature type="disulfide bond" evidence="1">
    <location>
        <begin position="72"/>
        <end position="90"/>
    </location>
</feature>
<feature type="disulfide bond" evidence="1">
    <location>
        <begin position="92"/>
        <end position="103"/>
    </location>
</feature>
<feature type="disulfide bond" evidence="1">
    <location>
        <begin position="108"/>
        <end position="118"/>
    </location>
</feature>
<feature type="disulfide bond" evidence="1">
    <location>
        <begin position="113"/>
        <end position="131"/>
    </location>
</feature>
<feature type="disulfide bond" evidence="1">
    <location>
        <begin position="133"/>
        <end position="147"/>
    </location>
</feature>
<feature type="disulfide bond" evidence="1">
    <location>
        <begin position="155"/>
        <end position="166"/>
    </location>
</feature>
<feature type="disulfide bond" evidence="1">
    <location>
        <begin position="159"/>
        <end position="175"/>
    </location>
</feature>
<feature type="disulfide bond" evidence="1">
    <location>
        <begin position="177"/>
        <end position="190"/>
    </location>
</feature>
<name>OS25_PLAGA</name>
<keyword id="KW-1003">Cell membrane</keyword>
<keyword id="KW-1015">Disulfide bond</keyword>
<keyword id="KW-0245">EGF-like domain</keyword>
<keyword id="KW-0325">Glycoprotein</keyword>
<keyword id="KW-0336">GPI-anchor</keyword>
<keyword id="KW-0449">Lipoprotein</keyword>
<keyword id="KW-0461">Malaria</keyword>
<keyword id="KW-0472">Membrane</keyword>
<keyword id="KW-0677">Repeat</keyword>
<keyword id="KW-0732">Signal</keyword>
<comment type="subcellular location">
    <subcellularLocation>
        <location evidence="3">Cell membrane</location>
        <topology evidence="3">Lipid-anchor</topology>
        <topology evidence="3">GPI-anchor</topology>
    </subcellularLocation>
</comment>
<comment type="developmental stage">
    <text>Expressed on zygotes and ookinetes.</text>
</comment>
<protein>
    <recommendedName>
        <fullName>25 kDa ookinete surface antigen</fullName>
    </recommendedName>
    <alternativeName>
        <fullName>Pgs25</fullName>
    </alternativeName>
</protein>
<accession>P13401</accession>
<sequence>MNMSYLFFFFFIQLVLKYINSKVTENTICKDGFLIQMSNHFECNCNPGFVLTSESTCENKVECNANSLDKRCGDFSKCAYKDLQQKELTCKCIDGYDLEESICVPNECKNFRCESGKCVLDPKQEAKIPMCSCFIGIVPSKENNNTCTIEGQTECTLKCTKENETCKKTSGIYKCDCKDGYTFDKEENACISFSLFNILNLSIIFIISLIYFYII</sequence>